<organism>
    <name type="scientific">Klebsiella pneumoniae subsp. pneumoniae (strain ATCC 700721 / MGH 78578)</name>
    <dbReference type="NCBI Taxonomy" id="272620"/>
    <lineage>
        <taxon>Bacteria</taxon>
        <taxon>Pseudomonadati</taxon>
        <taxon>Pseudomonadota</taxon>
        <taxon>Gammaproteobacteria</taxon>
        <taxon>Enterobacterales</taxon>
        <taxon>Enterobacteriaceae</taxon>
        <taxon>Klebsiella/Raoultella group</taxon>
        <taxon>Klebsiella</taxon>
        <taxon>Klebsiella pneumoniae complex</taxon>
    </lineage>
</organism>
<sequence>MSNSAMSVVILAAGKGTRMYSDLPKVLHTLAGKPMVQHVIDAANDLGACAVHLVYGHGGDLLRQTLHEDNLNWVLQAEQLGTGHAMQQAAPFFNDDEDILMLYGDVPLISVETLQRLRAAKPQGGIGLLTVKLDDPTGYGRITRENGQVTGIVEHKDASEAQRQIQEINTGILIAGGADLKRWLAKLTNNNAQGEYYITDIIAMAHQEGHQIVAVHPQRLSEVEGVNNRLQLARLERVYQAEQAEKLLLAGVMLRDPARFDLRGTLQHGRDVEIDTNVILEGNVVLGDRVKIGAGCVIKNSTIGDDCEISPYSVVEDAQLQAACTIGPFARLRPGAELLEGAHVGNFVEMKKARLGKGSKAGHLTYLGDAEIGDNVNIGAGTITCNYDGANKHKTIIGDDVFVGSDTQLVAPVTVGNGVTIAAGTTVTRNIADNELVLSRVPQVHKQGWQRPVKKK</sequence>
<evidence type="ECO:0000255" key="1">
    <source>
        <dbReference type="HAMAP-Rule" id="MF_01631"/>
    </source>
</evidence>
<evidence type="ECO:0000305" key="2"/>
<evidence type="ECO:0007829" key="3">
    <source>
        <dbReference type="PDB" id="8CU9"/>
    </source>
</evidence>
<accession>A6TG34</accession>
<comment type="function">
    <text evidence="1">Catalyzes the last two sequential reactions in the de novo biosynthetic pathway for UDP-N-acetylglucosamine (UDP-GlcNAc). The C-terminal domain catalyzes the transfer of acetyl group from acetyl coenzyme A to glucosamine-1-phosphate (GlcN-1-P) to produce N-acetylglucosamine-1-phosphate (GlcNAc-1-P), which is converted into UDP-GlcNAc by the transfer of uridine 5-monophosphate (from uridine 5-triphosphate), a reaction catalyzed by the N-terminal domain.</text>
</comment>
<comment type="catalytic activity">
    <reaction evidence="1">
        <text>alpha-D-glucosamine 1-phosphate + acetyl-CoA = N-acetyl-alpha-D-glucosamine 1-phosphate + CoA + H(+)</text>
        <dbReference type="Rhea" id="RHEA:13725"/>
        <dbReference type="ChEBI" id="CHEBI:15378"/>
        <dbReference type="ChEBI" id="CHEBI:57287"/>
        <dbReference type="ChEBI" id="CHEBI:57288"/>
        <dbReference type="ChEBI" id="CHEBI:57776"/>
        <dbReference type="ChEBI" id="CHEBI:58516"/>
        <dbReference type="EC" id="2.3.1.157"/>
    </reaction>
</comment>
<comment type="catalytic activity">
    <reaction evidence="1">
        <text>N-acetyl-alpha-D-glucosamine 1-phosphate + UTP + H(+) = UDP-N-acetyl-alpha-D-glucosamine + diphosphate</text>
        <dbReference type="Rhea" id="RHEA:13509"/>
        <dbReference type="ChEBI" id="CHEBI:15378"/>
        <dbReference type="ChEBI" id="CHEBI:33019"/>
        <dbReference type="ChEBI" id="CHEBI:46398"/>
        <dbReference type="ChEBI" id="CHEBI:57705"/>
        <dbReference type="ChEBI" id="CHEBI:57776"/>
        <dbReference type="EC" id="2.7.7.23"/>
    </reaction>
</comment>
<comment type="cofactor">
    <cofactor evidence="1">
        <name>Mg(2+)</name>
        <dbReference type="ChEBI" id="CHEBI:18420"/>
    </cofactor>
    <text evidence="1">Binds 1 Mg(2+) ion per subunit.</text>
</comment>
<comment type="pathway">
    <text evidence="1">Nucleotide-sugar biosynthesis; UDP-N-acetyl-alpha-D-glucosamine biosynthesis; N-acetyl-alpha-D-glucosamine 1-phosphate from alpha-D-glucosamine 6-phosphate (route II): step 2/2.</text>
</comment>
<comment type="pathway">
    <text evidence="1">Nucleotide-sugar biosynthesis; UDP-N-acetyl-alpha-D-glucosamine biosynthesis; UDP-N-acetyl-alpha-D-glucosamine from N-acetyl-alpha-D-glucosamine 1-phosphate: step 1/1.</text>
</comment>
<comment type="pathway">
    <text evidence="1">Bacterial outer membrane biogenesis; LPS lipid A biosynthesis.</text>
</comment>
<comment type="subunit">
    <text evidence="1">Homotrimer.</text>
</comment>
<comment type="subcellular location">
    <subcellularLocation>
        <location evidence="1">Cytoplasm</location>
    </subcellularLocation>
</comment>
<comment type="similarity">
    <text evidence="1">In the N-terminal section; belongs to the N-acetylglucosamine-1-phosphate uridyltransferase family.</text>
</comment>
<comment type="similarity">
    <text evidence="1">In the C-terminal section; belongs to the transferase hexapeptide repeat family.</text>
</comment>
<comment type="sequence caution" evidence="2">
    <conflict type="erroneous initiation">
        <sequence resource="EMBL-CDS" id="ABR79518"/>
    </conflict>
</comment>
<proteinExistence type="evidence at protein level"/>
<protein>
    <recommendedName>
        <fullName evidence="1">Bifunctional protein GlmU</fullName>
    </recommendedName>
    <domain>
        <recommendedName>
            <fullName evidence="1">UDP-N-acetylglucosamine pyrophosphorylase</fullName>
            <ecNumber evidence="1">2.7.7.23</ecNumber>
        </recommendedName>
        <alternativeName>
            <fullName evidence="1">N-acetylglucosamine-1-phosphate uridyltransferase</fullName>
        </alternativeName>
    </domain>
    <domain>
        <recommendedName>
            <fullName evidence="1">Glucosamine-1-phosphate N-acetyltransferase</fullName>
            <ecNumber evidence="1">2.3.1.157</ecNumber>
        </recommendedName>
    </domain>
</protein>
<keyword id="KW-0002">3D-structure</keyword>
<keyword id="KW-0012">Acyltransferase</keyword>
<keyword id="KW-0133">Cell shape</keyword>
<keyword id="KW-0961">Cell wall biogenesis/degradation</keyword>
<keyword id="KW-0963">Cytoplasm</keyword>
<keyword id="KW-0460">Magnesium</keyword>
<keyword id="KW-0479">Metal-binding</keyword>
<keyword id="KW-0511">Multifunctional enzyme</keyword>
<keyword id="KW-0548">Nucleotidyltransferase</keyword>
<keyword id="KW-0573">Peptidoglycan synthesis</keyword>
<keyword id="KW-0677">Repeat</keyword>
<keyword id="KW-0808">Transferase</keyword>
<gene>
    <name evidence="1" type="primary">glmU</name>
    <name type="ordered locus">KPN78578_40940</name>
    <name type="ORF">KPN_04135</name>
</gene>
<feature type="chain" id="PRO_0000337725" description="Bifunctional protein GlmU">
    <location>
        <begin position="1"/>
        <end position="456"/>
    </location>
</feature>
<feature type="region of interest" description="Pyrophosphorylase" evidence="1">
    <location>
        <begin position="1"/>
        <end position="229"/>
    </location>
</feature>
<feature type="region of interest" description="Linker" evidence="1">
    <location>
        <begin position="230"/>
        <end position="250"/>
    </location>
</feature>
<feature type="region of interest" description="N-acetyltransferase" evidence="1">
    <location>
        <begin position="251"/>
        <end position="456"/>
    </location>
</feature>
<feature type="active site" description="Proton acceptor" evidence="1">
    <location>
        <position position="363"/>
    </location>
</feature>
<feature type="binding site" evidence="1">
    <location>
        <begin position="11"/>
        <end position="14"/>
    </location>
    <ligand>
        <name>UDP-N-acetyl-alpha-D-glucosamine</name>
        <dbReference type="ChEBI" id="CHEBI:57705"/>
    </ligand>
</feature>
<feature type="binding site" evidence="1">
    <location>
        <position position="25"/>
    </location>
    <ligand>
        <name>UDP-N-acetyl-alpha-D-glucosamine</name>
        <dbReference type="ChEBI" id="CHEBI:57705"/>
    </ligand>
</feature>
<feature type="binding site" evidence="1">
    <location>
        <position position="76"/>
    </location>
    <ligand>
        <name>UDP-N-acetyl-alpha-D-glucosamine</name>
        <dbReference type="ChEBI" id="CHEBI:57705"/>
    </ligand>
</feature>
<feature type="binding site" evidence="1">
    <location>
        <begin position="81"/>
        <end position="82"/>
    </location>
    <ligand>
        <name>UDP-N-acetyl-alpha-D-glucosamine</name>
        <dbReference type="ChEBI" id="CHEBI:57705"/>
    </ligand>
</feature>
<feature type="binding site" evidence="1">
    <location>
        <begin position="103"/>
        <end position="105"/>
    </location>
    <ligand>
        <name>UDP-N-acetyl-alpha-D-glucosamine</name>
        <dbReference type="ChEBI" id="CHEBI:57705"/>
    </ligand>
</feature>
<feature type="binding site" evidence="1">
    <location>
        <position position="105"/>
    </location>
    <ligand>
        <name>Mg(2+)</name>
        <dbReference type="ChEBI" id="CHEBI:18420"/>
    </ligand>
</feature>
<feature type="binding site" evidence="1">
    <location>
        <position position="140"/>
    </location>
    <ligand>
        <name>UDP-N-acetyl-alpha-D-glucosamine</name>
        <dbReference type="ChEBI" id="CHEBI:57705"/>
    </ligand>
</feature>
<feature type="binding site" evidence="1">
    <location>
        <position position="154"/>
    </location>
    <ligand>
        <name>UDP-N-acetyl-alpha-D-glucosamine</name>
        <dbReference type="ChEBI" id="CHEBI:57705"/>
    </ligand>
</feature>
<feature type="binding site" evidence="1">
    <location>
        <position position="169"/>
    </location>
    <ligand>
        <name>UDP-N-acetyl-alpha-D-glucosamine</name>
        <dbReference type="ChEBI" id="CHEBI:57705"/>
    </ligand>
</feature>
<feature type="binding site" evidence="1">
    <location>
        <position position="227"/>
    </location>
    <ligand>
        <name>Mg(2+)</name>
        <dbReference type="ChEBI" id="CHEBI:18420"/>
    </ligand>
</feature>
<feature type="binding site" evidence="1">
    <location>
        <position position="227"/>
    </location>
    <ligand>
        <name>UDP-N-acetyl-alpha-D-glucosamine</name>
        <dbReference type="ChEBI" id="CHEBI:57705"/>
    </ligand>
</feature>
<feature type="binding site" evidence="1">
    <location>
        <position position="333"/>
    </location>
    <ligand>
        <name>UDP-N-acetyl-alpha-D-glucosamine</name>
        <dbReference type="ChEBI" id="CHEBI:57705"/>
    </ligand>
</feature>
<feature type="binding site" evidence="1">
    <location>
        <position position="351"/>
    </location>
    <ligand>
        <name>UDP-N-acetyl-alpha-D-glucosamine</name>
        <dbReference type="ChEBI" id="CHEBI:57705"/>
    </ligand>
</feature>
<feature type="binding site" evidence="1">
    <location>
        <position position="366"/>
    </location>
    <ligand>
        <name>UDP-N-acetyl-alpha-D-glucosamine</name>
        <dbReference type="ChEBI" id="CHEBI:57705"/>
    </ligand>
</feature>
<feature type="binding site" evidence="1">
    <location>
        <position position="377"/>
    </location>
    <ligand>
        <name>UDP-N-acetyl-alpha-D-glucosamine</name>
        <dbReference type="ChEBI" id="CHEBI:57705"/>
    </ligand>
</feature>
<feature type="binding site" evidence="1">
    <location>
        <position position="380"/>
    </location>
    <ligand>
        <name>acetyl-CoA</name>
        <dbReference type="ChEBI" id="CHEBI:57288"/>
    </ligand>
</feature>
<feature type="binding site" evidence="1">
    <location>
        <begin position="386"/>
        <end position="387"/>
    </location>
    <ligand>
        <name>acetyl-CoA</name>
        <dbReference type="ChEBI" id="CHEBI:57288"/>
    </ligand>
</feature>
<feature type="binding site" evidence="1">
    <location>
        <position position="405"/>
    </location>
    <ligand>
        <name>acetyl-CoA</name>
        <dbReference type="ChEBI" id="CHEBI:57288"/>
    </ligand>
</feature>
<feature type="binding site" evidence="1">
    <location>
        <position position="423"/>
    </location>
    <ligand>
        <name>acetyl-CoA</name>
        <dbReference type="ChEBI" id="CHEBI:57288"/>
    </ligand>
</feature>
<feature type="binding site" evidence="1">
    <location>
        <position position="440"/>
    </location>
    <ligand>
        <name>acetyl-CoA</name>
        <dbReference type="ChEBI" id="CHEBI:57288"/>
    </ligand>
</feature>
<feature type="strand" evidence="3">
    <location>
        <begin position="6"/>
        <end position="12"/>
    </location>
</feature>
<feature type="helix" evidence="3">
    <location>
        <begin position="17"/>
        <end position="19"/>
    </location>
</feature>
<feature type="helix" evidence="3">
    <location>
        <begin position="25"/>
        <end position="27"/>
    </location>
</feature>
<feature type="strand" evidence="3">
    <location>
        <begin position="28"/>
        <end position="30"/>
    </location>
</feature>
<feature type="helix" evidence="3">
    <location>
        <begin position="35"/>
        <end position="45"/>
    </location>
</feature>
<feature type="strand" evidence="3">
    <location>
        <begin position="51"/>
        <end position="57"/>
    </location>
</feature>
<feature type="helix" evidence="3">
    <location>
        <begin position="59"/>
        <end position="65"/>
    </location>
</feature>
<feature type="strand" evidence="3">
    <location>
        <begin position="71"/>
        <end position="75"/>
    </location>
</feature>
<feature type="helix" evidence="3">
    <location>
        <begin position="82"/>
        <end position="89"/>
    </location>
</feature>
<feature type="helix" evidence="3">
    <location>
        <begin position="90"/>
        <end position="92"/>
    </location>
</feature>
<feature type="strand" evidence="3">
    <location>
        <begin position="97"/>
        <end position="103"/>
    </location>
</feature>
<feature type="helix" evidence="3">
    <location>
        <begin position="111"/>
        <end position="120"/>
    </location>
</feature>
<feature type="strand" evidence="3">
    <location>
        <begin position="125"/>
        <end position="132"/>
    </location>
</feature>
<feature type="strand" evidence="3">
    <location>
        <begin position="141"/>
        <end position="145"/>
    </location>
</feature>
<feature type="strand" evidence="3">
    <location>
        <begin position="148"/>
        <end position="153"/>
    </location>
</feature>
<feature type="helix" evidence="3">
    <location>
        <begin position="155"/>
        <end position="157"/>
    </location>
</feature>
<feature type="helix" evidence="3">
    <location>
        <begin position="162"/>
        <end position="164"/>
    </location>
</feature>
<feature type="strand" evidence="3">
    <location>
        <begin position="167"/>
        <end position="176"/>
    </location>
</feature>
<feature type="helix" evidence="3">
    <location>
        <begin position="177"/>
        <end position="185"/>
    </location>
</feature>
<feature type="strand" evidence="3">
    <location>
        <begin position="191"/>
        <end position="193"/>
    </location>
</feature>
<feature type="helix" evidence="3">
    <location>
        <begin position="200"/>
        <end position="208"/>
    </location>
</feature>
<feature type="strand" evidence="3">
    <location>
        <begin position="212"/>
        <end position="215"/>
    </location>
</feature>
<feature type="helix" evidence="3">
    <location>
        <begin position="220"/>
        <end position="223"/>
    </location>
</feature>
<feature type="helix" evidence="3">
    <location>
        <begin position="229"/>
        <end position="250"/>
    </location>
</feature>
<feature type="strand" evidence="3">
    <location>
        <begin position="253"/>
        <end position="255"/>
    </location>
</feature>
<feature type="helix" evidence="3">
    <location>
        <begin position="257"/>
        <end position="259"/>
    </location>
</feature>
<feature type="strand" evidence="3">
    <location>
        <begin position="260"/>
        <end position="268"/>
    </location>
</feature>
<feature type="strand" evidence="3">
    <location>
        <begin position="278"/>
        <end position="286"/>
    </location>
</feature>
<feature type="strand" evidence="3">
    <location>
        <begin position="297"/>
        <end position="300"/>
    </location>
</feature>
<feature type="strand" evidence="3">
    <location>
        <begin position="314"/>
        <end position="317"/>
    </location>
</feature>
<feature type="strand" evidence="3">
    <location>
        <begin position="328"/>
        <end position="332"/>
    </location>
</feature>
<feature type="strand" evidence="3">
    <location>
        <begin position="336"/>
        <end position="338"/>
    </location>
</feature>
<feature type="strand" evidence="3">
    <location>
        <begin position="343"/>
        <end position="346"/>
    </location>
</feature>
<feature type="strand" evidence="3">
    <location>
        <begin position="348"/>
        <end position="355"/>
    </location>
</feature>
<feature type="strand" evidence="3">
    <location>
        <begin position="360"/>
        <end position="364"/>
    </location>
</feature>
<feature type="strand" evidence="3">
    <location>
        <begin position="366"/>
        <end position="372"/>
    </location>
</feature>
<feature type="strand" evidence="3">
    <location>
        <begin position="383"/>
        <end position="385"/>
    </location>
</feature>
<feature type="strand" evidence="3">
    <location>
        <begin position="389"/>
        <end position="392"/>
    </location>
</feature>
<feature type="strand" evidence="3">
    <location>
        <begin position="395"/>
        <end position="397"/>
    </location>
</feature>
<feature type="strand" evidence="3">
    <location>
        <begin position="408"/>
        <end position="415"/>
    </location>
</feature>
<name>GLMU_KLEP7</name>
<dbReference type="EC" id="2.7.7.23" evidence="1"/>
<dbReference type="EC" id="2.3.1.157" evidence="1"/>
<dbReference type="EMBL" id="CP000647">
    <property type="protein sequence ID" value="ABR79518.1"/>
    <property type="status" value="ALT_INIT"/>
    <property type="molecule type" value="Genomic_DNA"/>
</dbReference>
<dbReference type="RefSeq" id="WP_004173839.1">
    <property type="nucleotide sequence ID" value="NC_009648.1"/>
</dbReference>
<dbReference type="PDB" id="8CU9">
    <property type="method" value="X-ray"/>
    <property type="resolution" value="2.65 A"/>
    <property type="chains" value="A=1-456"/>
</dbReference>
<dbReference type="PDBsum" id="8CU9"/>
<dbReference type="SMR" id="A6TG34"/>
<dbReference type="STRING" id="272620.KPN_04135"/>
<dbReference type="PaxDb" id="272620-KPN_04135"/>
<dbReference type="EnsemblBacteria" id="ABR79518">
    <property type="protein sequence ID" value="ABR79518"/>
    <property type="gene ID" value="KPN_04135"/>
</dbReference>
<dbReference type="KEGG" id="kpn:KPN_04135"/>
<dbReference type="HOGENOM" id="CLU_029499_15_2_6"/>
<dbReference type="UniPathway" id="UPA00113">
    <property type="reaction ID" value="UER00532"/>
</dbReference>
<dbReference type="UniPathway" id="UPA00113">
    <property type="reaction ID" value="UER00533"/>
</dbReference>
<dbReference type="UniPathway" id="UPA00973"/>
<dbReference type="Proteomes" id="UP000000265">
    <property type="component" value="Chromosome"/>
</dbReference>
<dbReference type="GO" id="GO:0005737">
    <property type="term" value="C:cytoplasm"/>
    <property type="evidence" value="ECO:0007669"/>
    <property type="project" value="UniProtKB-SubCell"/>
</dbReference>
<dbReference type="GO" id="GO:0016020">
    <property type="term" value="C:membrane"/>
    <property type="evidence" value="ECO:0007669"/>
    <property type="project" value="GOC"/>
</dbReference>
<dbReference type="GO" id="GO:0019134">
    <property type="term" value="F:glucosamine-1-phosphate N-acetyltransferase activity"/>
    <property type="evidence" value="ECO:0007669"/>
    <property type="project" value="UniProtKB-UniRule"/>
</dbReference>
<dbReference type="GO" id="GO:0000287">
    <property type="term" value="F:magnesium ion binding"/>
    <property type="evidence" value="ECO:0007669"/>
    <property type="project" value="UniProtKB-UniRule"/>
</dbReference>
<dbReference type="GO" id="GO:0003977">
    <property type="term" value="F:UDP-N-acetylglucosamine diphosphorylase activity"/>
    <property type="evidence" value="ECO:0007669"/>
    <property type="project" value="UniProtKB-UniRule"/>
</dbReference>
<dbReference type="GO" id="GO:0000902">
    <property type="term" value="P:cell morphogenesis"/>
    <property type="evidence" value="ECO:0007669"/>
    <property type="project" value="UniProtKB-UniRule"/>
</dbReference>
<dbReference type="GO" id="GO:0071555">
    <property type="term" value="P:cell wall organization"/>
    <property type="evidence" value="ECO:0007669"/>
    <property type="project" value="UniProtKB-KW"/>
</dbReference>
<dbReference type="GO" id="GO:0009245">
    <property type="term" value="P:lipid A biosynthetic process"/>
    <property type="evidence" value="ECO:0007669"/>
    <property type="project" value="UniProtKB-UniRule"/>
</dbReference>
<dbReference type="GO" id="GO:0009252">
    <property type="term" value="P:peptidoglycan biosynthetic process"/>
    <property type="evidence" value="ECO:0007669"/>
    <property type="project" value="UniProtKB-UniRule"/>
</dbReference>
<dbReference type="GO" id="GO:0008360">
    <property type="term" value="P:regulation of cell shape"/>
    <property type="evidence" value="ECO:0007669"/>
    <property type="project" value="UniProtKB-KW"/>
</dbReference>
<dbReference type="GO" id="GO:0006048">
    <property type="term" value="P:UDP-N-acetylglucosamine biosynthetic process"/>
    <property type="evidence" value="ECO:0007669"/>
    <property type="project" value="UniProtKB-UniPathway"/>
</dbReference>
<dbReference type="CDD" id="cd02540">
    <property type="entry name" value="GT2_GlmU_N_bac"/>
    <property type="match status" value="1"/>
</dbReference>
<dbReference type="CDD" id="cd03353">
    <property type="entry name" value="LbH_GlmU_C"/>
    <property type="match status" value="1"/>
</dbReference>
<dbReference type="FunFam" id="2.160.10.10:FF:000011">
    <property type="entry name" value="Bifunctional protein GlmU"/>
    <property type="match status" value="1"/>
</dbReference>
<dbReference type="FunFam" id="3.90.550.10:FF:000006">
    <property type="entry name" value="Bifunctional protein GlmU"/>
    <property type="match status" value="1"/>
</dbReference>
<dbReference type="Gene3D" id="2.160.10.10">
    <property type="entry name" value="Hexapeptide repeat proteins"/>
    <property type="match status" value="1"/>
</dbReference>
<dbReference type="Gene3D" id="3.90.550.10">
    <property type="entry name" value="Spore Coat Polysaccharide Biosynthesis Protein SpsA, Chain A"/>
    <property type="match status" value="1"/>
</dbReference>
<dbReference type="HAMAP" id="MF_01631">
    <property type="entry name" value="GlmU"/>
    <property type="match status" value="1"/>
</dbReference>
<dbReference type="InterPro" id="IPR005882">
    <property type="entry name" value="Bifunctional_GlmU"/>
</dbReference>
<dbReference type="InterPro" id="IPR050065">
    <property type="entry name" value="GlmU-like"/>
</dbReference>
<dbReference type="InterPro" id="IPR038009">
    <property type="entry name" value="GlmU_C_LbH"/>
</dbReference>
<dbReference type="InterPro" id="IPR001451">
    <property type="entry name" value="Hexapep"/>
</dbReference>
<dbReference type="InterPro" id="IPR018357">
    <property type="entry name" value="Hexapep_transf_CS"/>
</dbReference>
<dbReference type="InterPro" id="IPR025877">
    <property type="entry name" value="MobA-like_NTP_Trfase"/>
</dbReference>
<dbReference type="InterPro" id="IPR029044">
    <property type="entry name" value="Nucleotide-diphossugar_trans"/>
</dbReference>
<dbReference type="InterPro" id="IPR011004">
    <property type="entry name" value="Trimer_LpxA-like_sf"/>
</dbReference>
<dbReference type="NCBIfam" id="TIGR01173">
    <property type="entry name" value="glmU"/>
    <property type="match status" value="1"/>
</dbReference>
<dbReference type="NCBIfam" id="NF006986">
    <property type="entry name" value="PRK09451.1"/>
    <property type="match status" value="1"/>
</dbReference>
<dbReference type="PANTHER" id="PTHR43584:SF3">
    <property type="entry name" value="BIFUNCTIONAL PROTEIN GLMU"/>
    <property type="match status" value="1"/>
</dbReference>
<dbReference type="PANTHER" id="PTHR43584">
    <property type="entry name" value="NUCLEOTIDYL TRANSFERASE"/>
    <property type="match status" value="1"/>
</dbReference>
<dbReference type="Pfam" id="PF00132">
    <property type="entry name" value="Hexapep"/>
    <property type="match status" value="2"/>
</dbReference>
<dbReference type="Pfam" id="PF12804">
    <property type="entry name" value="NTP_transf_3"/>
    <property type="match status" value="1"/>
</dbReference>
<dbReference type="SUPFAM" id="SSF53448">
    <property type="entry name" value="Nucleotide-diphospho-sugar transferases"/>
    <property type="match status" value="1"/>
</dbReference>
<dbReference type="SUPFAM" id="SSF51161">
    <property type="entry name" value="Trimeric LpxA-like enzymes"/>
    <property type="match status" value="1"/>
</dbReference>
<dbReference type="PROSITE" id="PS00101">
    <property type="entry name" value="HEXAPEP_TRANSFERASES"/>
    <property type="match status" value="1"/>
</dbReference>
<reference key="1">
    <citation type="submission" date="2006-09" db="EMBL/GenBank/DDBJ databases">
        <authorList>
            <consortium name="The Klebsiella pneumonia Genome Sequencing Project"/>
            <person name="McClelland M."/>
            <person name="Sanderson E.K."/>
            <person name="Spieth J."/>
            <person name="Clifton W.S."/>
            <person name="Latreille P."/>
            <person name="Sabo A."/>
            <person name="Pepin K."/>
            <person name="Bhonagiri V."/>
            <person name="Porwollik S."/>
            <person name="Ali J."/>
            <person name="Wilson R.K."/>
        </authorList>
    </citation>
    <scope>NUCLEOTIDE SEQUENCE [LARGE SCALE GENOMIC DNA]</scope>
    <source>
        <strain>ATCC 700721 / MGH 78578</strain>
    </source>
</reference>